<gene>
    <name type="primary">rpoZ</name>
    <name type="ordered locus">jhp_0713</name>
</gene>
<keyword id="KW-0240">DNA-directed RNA polymerase</keyword>
<keyword id="KW-0548">Nucleotidyltransferase</keyword>
<keyword id="KW-0804">Transcription</keyword>
<keyword id="KW-0808">Transferase</keyword>
<organism>
    <name type="scientific">Helicobacter pylori (strain J99 / ATCC 700824)</name>
    <name type="common">Campylobacter pylori J99</name>
    <dbReference type="NCBI Taxonomy" id="85963"/>
    <lineage>
        <taxon>Bacteria</taxon>
        <taxon>Pseudomonadati</taxon>
        <taxon>Campylobacterota</taxon>
        <taxon>Epsilonproteobacteria</taxon>
        <taxon>Campylobacterales</taxon>
        <taxon>Helicobacteraceae</taxon>
        <taxon>Helicobacter</taxon>
    </lineage>
</organism>
<evidence type="ECO:0000250" key="1"/>
<evidence type="ECO:0000305" key="2"/>
<comment type="function">
    <text evidence="1">Promotes RNA polymerase assembly. Latches the N- and C-terminal regions of the beta' subunit thereby facilitating its interaction with the beta and alpha subunits (By similarity).</text>
</comment>
<comment type="catalytic activity">
    <reaction>
        <text>RNA(n) + a ribonucleoside 5'-triphosphate = RNA(n+1) + diphosphate</text>
        <dbReference type="Rhea" id="RHEA:21248"/>
        <dbReference type="Rhea" id="RHEA-COMP:14527"/>
        <dbReference type="Rhea" id="RHEA-COMP:17342"/>
        <dbReference type="ChEBI" id="CHEBI:33019"/>
        <dbReference type="ChEBI" id="CHEBI:61557"/>
        <dbReference type="ChEBI" id="CHEBI:140395"/>
        <dbReference type="EC" id="2.7.7.6"/>
    </reaction>
</comment>
<comment type="subunit">
    <text evidence="1">The RNAP catalytic core consists of 2 alpha, 1 beta/beta' and 1 omega subunit. When a sigma factor is associated with the core the holoenzyme is formed, which can initiate transcription (By similarity).</text>
</comment>
<comment type="similarity">
    <text evidence="2">Belongs to the RNA polymerase subunit omega family.</text>
</comment>
<accession>P60326</accession>
<accession>O25467</accession>
<accession>Q9ZL67</accession>
<proteinExistence type="inferred from homology"/>
<name>RPOZ_HELPJ</name>
<dbReference type="EC" id="2.7.7.6"/>
<dbReference type="EMBL" id="AE001439">
    <property type="protein sequence ID" value="AAD06288.1"/>
    <property type="molecule type" value="Genomic_DNA"/>
</dbReference>
<dbReference type="PIR" id="D71898">
    <property type="entry name" value="D71898"/>
</dbReference>
<dbReference type="RefSeq" id="WP_000712202.1">
    <property type="nucleotide sequence ID" value="NZ_CP011330.1"/>
</dbReference>
<dbReference type="SMR" id="P60326"/>
<dbReference type="KEGG" id="hpj:jhp_0713"/>
<dbReference type="PATRIC" id="fig|85963.30.peg.264"/>
<dbReference type="eggNOG" id="COG1758">
    <property type="taxonomic scope" value="Bacteria"/>
</dbReference>
<dbReference type="Proteomes" id="UP000000804">
    <property type="component" value="Chromosome"/>
</dbReference>
<dbReference type="GO" id="GO:0000428">
    <property type="term" value="C:DNA-directed RNA polymerase complex"/>
    <property type="evidence" value="ECO:0007669"/>
    <property type="project" value="UniProtKB-KW"/>
</dbReference>
<dbReference type="GO" id="GO:0003677">
    <property type="term" value="F:DNA binding"/>
    <property type="evidence" value="ECO:0007669"/>
    <property type="project" value="UniProtKB-UniRule"/>
</dbReference>
<dbReference type="GO" id="GO:0003899">
    <property type="term" value="F:DNA-directed RNA polymerase activity"/>
    <property type="evidence" value="ECO:0007669"/>
    <property type="project" value="UniProtKB-UniRule"/>
</dbReference>
<dbReference type="GO" id="GO:0006351">
    <property type="term" value="P:DNA-templated transcription"/>
    <property type="evidence" value="ECO:0007669"/>
    <property type="project" value="UniProtKB-UniRule"/>
</dbReference>
<dbReference type="Gene3D" id="3.90.940.10">
    <property type="match status" value="1"/>
</dbReference>
<dbReference type="HAMAP" id="MF_00366">
    <property type="entry name" value="RNApol_bact_RpoZ"/>
    <property type="match status" value="1"/>
</dbReference>
<dbReference type="InterPro" id="IPR003716">
    <property type="entry name" value="DNA-dir_RNA_pol_omega"/>
</dbReference>
<dbReference type="InterPro" id="IPR006110">
    <property type="entry name" value="Pol_omega/Rpo6/RPB6"/>
</dbReference>
<dbReference type="InterPro" id="IPR036161">
    <property type="entry name" value="RPB6/omega-like_sf"/>
</dbReference>
<dbReference type="NCBIfam" id="NF001579">
    <property type="entry name" value="PRK00392.6-2"/>
    <property type="match status" value="1"/>
</dbReference>
<dbReference type="NCBIfam" id="TIGR00690">
    <property type="entry name" value="rpoZ"/>
    <property type="match status" value="1"/>
</dbReference>
<dbReference type="Pfam" id="PF01192">
    <property type="entry name" value="RNA_pol_Rpb6"/>
    <property type="match status" value="1"/>
</dbReference>
<dbReference type="SMART" id="SM01409">
    <property type="entry name" value="RNA_pol_Rpb6"/>
    <property type="match status" value="1"/>
</dbReference>
<dbReference type="SUPFAM" id="SSF63562">
    <property type="entry name" value="RPB6/omega subunit-like"/>
    <property type="match status" value="1"/>
</dbReference>
<feature type="chain" id="PRO_0000128944" description="DNA-directed RNA polymerase subunit omega">
    <location>
        <begin position="1"/>
        <end position="74"/>
    </location>
</feature>
<sequence length="74" mass="8505">MKKERTESLVAQALKNIGNDRYMLDNLVFARVKQLNAGAKTLVNMDPKRHKLVDIAIREIAEGKIDIDRIDERN</sequence>
<protein>
    <recommendedName>
        <fullName>DNA-directed RNA polymerase subunit omega</fullName>
        <shortName>RNAP omega subunit</shortName>
        <ecNumber>2.7.7.6</ecNumber>
    </recommendedName>
    <alternativeName>
        <fullName>RNA polymerase omega subunit</fullName>
    </alternativeName>
    <alternativeName>
        <fullName>Transcriptase subunit omega</fullName>
    </alternativeName>
</protein>
<reference key="1">
    <citation type="journal article" date="1999" name="Nature">
        <title>Genomic sequence comparison of two unrelated isolates of the human gastric pathogen Helicobacter pylori.</title>
        <authorList>
            <person name="Alm R.A."/>
            <person name="Ling L.-S.L."/>
            <person name="Moir D.T."/>
            <person name="King B.L."/>
            <person name="Brown E.D."/>
            <person name="Doig P.C."/>
            <person name="Smith D.R."/>
            <person name="Noonan B."/>
            <person name="Guild B.C."/>
            <person name="deJonge B.L."/>
            <person name="Carmel G."/>
            <person name="Tummino P.J."/>
            <person name="Caruso A."/>
            <person name="Uria-Nickelsen M."/>
            <person name="Mills D.M."/>
            <person name="Ives C."/>
            <person name="Gibson R."/>
            <person name="Merberg D."/>
            <person name="Mills S.D."/>
            <person name="Jiang Q."/>
            <person name="Taylor D.E."/>
            <person name="Vovis G.F."/>
            <person name="Trust T.J."/>
        </authorList>
    </citation>
    <scope>NUCLEOTIDE SEQUENCE [LARGE SCALE GENOMIC DNA]</scope>
    <source>
        <strain>J99 / ATCC 700824</strain>
    </source>
</reference>